<protein>
    <recommendedName>
        <fullName evidence="5">Y+L amino acid transporter 1</fullName>
    </recommendedName>
    <alternativeName>
        <fullName>Solute carrier family 7 member 7</fullName>
    </alternativeName>
    <alternativeName>
        <fullName>y(+)L-type amino acid transporter 1</fullName>
        <shortName>Y+LAT1</shortName>
        <shortName>y+LAT-1</shortName>
    </alternativeName>
</protein>
<sequence length="512" mass="55641">MVASTKYEVAAQNEADEADGSAQGDGAGPAAEQVKLKKEISLLNGVCLIVGNMIGSGIFVSPKGVLMYSASFGLSLVIWAVGGIFSVFGALCYAELGTTIKKSGASYAYILEAFGGFLAFIRLWTSLLIIEPTSQAVIAITFANYMVQPLFPSCGAPYAAGRLLAAACICLLTFINCAYVKWGTLVQDIFTYAKVLALIAVIIAGIVRLGQGATTNFEDSFEGSSFAMGDIALALYSALFSYSGWDTLNYVTEEIRNPERNLPLSIGISMPIVTIIYLLTNVAYYSVLDIKDILASDAVAVTFADQIFGIFNWTIPLAVALSCFGGLNASIVAASRLLFVGSREGHLPDAICMIHVERFTPVPSLLFNGILALVYLCVEDIFQLINYYSFSYWFFVGLSIVGQLYLRWKEPDRPRPLKLSLFFPIVFCLCTIFLVAVPLYSDTINSLIGIGIALSGLPFYFLIIRVPEHKRPLCLRRIVASTTRYLQIICMSVAAEMDLEDGELPKQGPKSK</sequence>
<keyword id="KW-0029">Amino-acid transport</keyword>
<keyword id="KW-1003">Cell membrane</keyword>
<keyword id="KW-1015">Disulfide bond</keyword>
<keyword id="KW-0325">Glycoprotein</keyword>
<keyword id="KW-0472">Membrane</keyword>
<keyword id="KW-0597">Phosphoprotein</keyword>
<keyword id="KW-1185">Reference proteome</keyword>
<keyword id="KW-0812">Transmembrane</keyword>
<keyword id="KW-1133">Transmembrane helix</keyword>
<keyword id="KW-0813">Transport</keyword>
<dbReference type="EMBL" id="AB020520">
    <property type="protein sequence ID" value="BAA87325.1"/>
    <property type="molecule type" value="mRNA"/>
</dbReference>
<dbReference type="EMBL" id="AF200684">
    <property type="protein sequence ID" value="AAF07216.1"/>
    <property type="molecule type" value="mRNA"/>
</dbReference>
<dbReference type="EMBL" id="BC091142">
    <property type="protein sequence ID" value="AAH91142.1"/>
    <property type="molecule type" value="mRNA"/>
</dbReference>
<dbReference type="RefSeq" id="NP_112631.1">
    <property type="nucleotide sequence ID" value="NM_031341.2"/>
</dbReference>
<dbReference type="RefSeq" id="XP_006252082.1">
    <property type="nucleotide sequence ID" value="XM_006252020.5"/>
</dbReference>
<dbReference type="RefSeq" id="XP_006252083.1">
    <property type="nucleotide sequence ID" value="XM_006252021.3"/>
</dbReference>
<dbReference type="RefSeq" id="XP_006252085.1">
    <property type="nucleotide sequence ID" value="XM_006252023.5"/>
</dbReference>
<dbReference type="RefSeq" id="XP_006252086.1">
    <property type="nucleotide sequence ID" value="XM_006252024.3"/>
</dbReference>
<dbReference type="RefSeq" id="XP_008768927.1">
    <property type="nucleotide sequence ID" value="XM_008770705.4"/>
</dbReference>
<dbReference type="RefSeq" id="XP_017455296.1">
    <property type="nucleotide sequence ID" value="XM_017599807.1"/>
</dbReference>
<dbReference type="RefSeq" id="XP_017455297.1">
    <property type="nucleotide sequence ID" value="XM_017599808.1"/>
</dbReference>
<dbReference type="RefSeq" id="XP_017455298.1">
    <property type="nucleotide sequence ID" value="XM_017599809.1"/>
</dbReference>
<dbReference type="RefSeq" id="XP_038949620.1">
    <property type="nucleotide sequence ID" value="XM_039093692.2"/>
</dbReference>
<dbReference type="RefSeq" id="XP_038949621.1">
    <property type="nucleotide sequence ID" value="XM_039093693.2"/>
</dbReference>
<dbReference type="RefSeq" id="XP_038949622.1">
    <property type="nucleotide sequence ID" value="XM_039093694.2"/>
</dbReference>
<dbReference type="RefSeq" id="XP_038949623.1">
    <property type="nucleotide sequence ID" value="XM_039093695.1"/>
</dbReference>
<dbReference type="RefSeq" id="XP_038949624.1">
    <property type="nucleotide sequence ID" value="XM_039093696.2"/>
</dbReference>
<dbReference type="SMR" id="Q9R0S5"/>
<dbReference type="FunCoup" id="Q9R0S5">
    <property type="interactions" value="319"/>
</dbReference>
<dbReference type="STRING" id="10116.ENSRNOP00000014391"/>
<dbReference type="TCDB" id="2.A.3.8.7">
    <property type="family name" value="the amino acid-polyamine-organocation (apc) family"/>
</dbReference>
<dbReference type="GlyCosmos" id="Q9R0S5">
    <property type="glycosylation" value="1 site, No reported glycans"/>
</dbReference>
<dbReference type="GlyGen" id="Q9R0S5">
    <property type="glycosylation" value="1 site"/>
</dbReference>
<dbReference type="iPTMnet" id="Q9R0S5"/>
<dbReference type="PhosphoSitePlus" id="Q9R0S5"/>
<dbReference type="PaxDb" id="10116-ENSRNOP00000014391"/>
<dbReference type="Ensembl" id="ENSRNOT00000014391.6">
    <property type="protein sequence ID" value="ENSRNOP00000014391.3"/>
    <property type="gene ID" value="ENSRNOG00000010296.7"/>
</dbReference>
<dbReference type="GeneID" id="83509"/>
<dbReference type="KEGG" id="rno:83509"/>
<dbReference type="UCSC" id="RGD:619902">
    <property type="organism name" value="rat"/>
</dbReference>
<dbReference type="AGR" id="RGD:619902"/>
<dbReference type="CTD" id="9056"/>
<dbReference type="RGD" id="619902">
    <property type="gene designation" value="Slc7a7"/>
</dbReference>
<dbReference type="eggNOG" id="KOG1287">
    <property type="taxonomic scope" value="Eukaryota"/>
</dbReference>
<dbReference type="GeneTree" id="ENSGT00940000160134"/>
<dbReference type="HOGENOM" id="CLU_007946_3_0_1"/>
<dbReference type="InParanoid" id="Q9R0S5"/>
<dbReference type="OMA" id="AIVFGKY"/>
<dbReference type="OrthoDB" id="10062876at2759"/>
<dbReference type="PhylomeDB" id="Q9R0S5"/>
<dbReference type="TreeFam" id="TF313355"/>
<dbReference type="Reactome" id="R-RNO-210991">
    <property type="pathway name" value="Basigin interactions"/>
</dbReference>
<dbReference type="Reactome" id="R-RNO-352230">
    <property type="pathway name" value="Amino acid transport across the plasma membrane"/>
</dbReference>
<dbReference type="PRO" id="PR:Q9R0S5"/>
<dbReference type="Proteomes" id="UP000002494">
    <property type="component" value="Chromosome 15"/>
</dbReference>
<dbReference type="Bgee" id="ENSRNOG00000010296">
    <property type="expression patterns" value="Expressed in adult mammalian kidney and 18 other cell types or tissues"/>
</dbReference>
<dbReference type="GO" id="GO:0016323">
    <property type="term" value="C:basolateral plasma membrane"/>
    <property type="evidence" value="ECO:0000266"/>
    <property type="project" value="RGD"/>
</dbReference>
<dbReference type="GO" id="GO:0015174">
    <property type="term" value="F:basic amino acid transmembrane transporter activity"/>
    <property type="evidence" value="ECO:0000266"/>
    <property type="project" value="RGD"/>
</dbReference>
<dbReference type="GO" id="GO:0015179">
    <property type="term" value="F:L-amino acid transmembrane transporter activity"/>
    <property type="evidence" value="ECO:0000318"/>
    <property type="project" value="GO_Central"/>
</dbReference>
<dbReference type="GO" id="GO:0061459">
    <property type="term" value="F:L-arginine transmembrane transporter activity"/>
    <property type="evidence" value="ECO:0000250"/>
    <property type="project" value="UniProtKB"/>
</dbReference>
<dbReference type="GO" id="GO:0003333">
    <property type="term" value="P:amino acid transmembrane transport"/>
    <property type="evidence" value="ECO:0000318"/>
    <property type="project" value="GO_Central"/>
</dbReference>
<dbReference type="GO" id="GO:1903826">
    <property type="term" value="P:L-arginine transmembrane transport"/>
    <property type="evidence" value="ECO:0000250"/>
    <property type="project" value="UniProtKB"/>
</dbReference>
<dbReference type="GO" id="GO:0015820">
    <property type="term" value="P:L-leucine transport"/>
    <property type="evidence" value="ECO:0000250"/>
    <property type="project" value="UniProtKB"/>
</dbReference>
<dbReference type="GO" id="GO:0000821">
    <property type="term" value="P:regulation of arginine metabolic process"/>
    <property type="evidence" value="ECO:0000266"/>
    <property type="project" value="RGD"/>
</dbReference>
<dbReference type="FunFam" id="1.20.1740.10:FF:000003">
    <property type="entry name" value="Y+L amino acid transporter 1 isoform X1"/>
    <property type="match status" value="1"/>
</dbReference>
<dbReference type="Gene3D" id="1.20.1740.10">
    <property type="entry name" value="Amino acid/polyamine transporter I"/>
    <property type="match status" value="1"/>
</dbReference>
<dbReference type="InterPro" id="IPR002293">
    <property type="entry name" value="AA/rel_permease1"/>
</dbReference>
<dbReference type="InterPro" id="IPR050598">
    <property type="entry name" value="AminoAcid_Transporter"/>
</dbReference>
<dbReference type="PANTHER" id="PTHR11785">
    <property type="entry name" value="AMINO ACID TRANSPORTER"/>
    <property type="match status" value="1"/>
</dbReference>
<dbReference type="PANTHER" id="PTHR11785:SF303">
    <property type="entry name" value="Y+L AMINO ACID TRANSPORTER 1"/>
    <property type="match status" value="1"/>
</dbReference>
<dbReference type="Pfam" id="PF13520">
    <property type="entry name" value="AA_permease_2"/>
    <property type="match status" value="1"/>
</dbReference>
<dbReference type="PIRSF" id="PIRSF006060">
    <property type="entry name" value="AA_transporter"/>
    <property type="match status" value="1"/>
</dbReference>
<comment type="function">
    <text evidence="1 3">Heterodimer with SLC3A2, that functions as an antiporter which operates as an efflux route by exporting cationic amino acids from inside the cells in exchange with neutral amino acids plus sodium ions and may participate in nitric oxide synthesis via the transport of L-arginine (PubMed:10777485). Also mediates L-arginine transport in non-polarized cells, such as monocytes, and is essential for the correct function of these cells (By similarity). The transport mechanism is electroneutral and operates with a stoichiometry of 1:1 (PubMed:10777485). In vitro, Na(+) and Li(+), but also H(+), are cotransported with the neutral amino acids (PubMed:10777485).</text>
</comment>
<comment type="catalytic activity">
    <reaction evidence="3">
        <text>L-leucine(out) + L-arginine(in) + Na(+)(out) = L-leucine(in) + L-arginine(out) + Na(+)(in)</text>
        <dbReference type="Rhea" id="RHEA:70831"/>
        <dbReference type="ChEBI" id="CHEBI:29101"/>
        <dbReference type="ChEBI" id="CHEBI:32682"/>
        <dbReference type="ChEBI" id="CHEBI:57427"/>
    </reaction>
</comment>
<comment type="catalytic activity">
    <reaction evidence="3">
        <text>L-leucine(out) + L-lysine(in) + Na(+)(out) = L-leucine(in) + L-lysine(out) + Na(+)(in)</text>
        <dbReference type="Rhea" id="RHEA:74971"/>
        <dbReference type="ChEBI" id="CHEBI:29101"/>
        <dbReference type="ChEBI" id="CHEBI:32551"/>
        <dbReference type="ChEBI" id="CHEBI:57427"/>
    </reaction>
</comment>
<comment type="catalytic activity">
    <reaction evidence="3">
        <text>L-leucine(out) + L-ornithine(in) + Na(+)(out) = L-leucine(in) + L-ornithine(out) + Na(+)(in)</text>
        <dbReference type="Rhea" id="RHEA:74963"/>
        <dbReference type="ChEBI" id="CHEBI:29101"/>
        <dbReference type="ChEBI" id="CHEBI:46911"/>
        <dbReference type="ChEBI" id="CHEBI:57427"/>
    </reaction>
</comment>
<comment type="biophysicochemical properties">
    <kinetics>
        <KM evidence="3">44 uM for L-leucine (in presence of 100 mM Na(+))</KM>
        <KM evidence="3">423 uM for L-leucine (in absence of Na(+))</KM>
        <KM evidence="3">68 uM for L-lysine (in presence of 100 mM Na(+))</KM>
        <KM evidence="3">50 uM for L-lysine (in absence of Na(+))</KM>
        <KM evidence="3">383 uM for L-leucine (in absence of Na(+) and pH 7.5)</KM>
        <KM evidence="3">119 uM for L-leucine (in absence of Na(+) and pH 5.5)</KM>
        <KM evidence="6">74 uM for L-lysine (in absence of Na(+) and pH 7.5)</KM>
        <KM evidence="6">81 uM for L-lysine (in absence of Na(+) and pH 5.5)</KM>
        <KM evidence="3">71.8 uM for sodium ion (in absence of Na(+) and pH 7.5)</KM>
        <KM evidence="3">105.9 uM for L-leucine (in absence of Na(+) and pH 5.5)</KM>
    </kinetics>
</comment>
<comment type="subunit">
    <text evidence="1">Disulfide-linked heterodimer with the amino acid transport protein SLC3A2/4F2hc.</text>
</comment>
<comment type="subcellular location">
    <subcellularLocation>
        <location evidence="1">Basolateral cell membrane</location>
        <topology evidence="2">Multi-pass membrane protein</topology>
    </subcellularLocation>
</comment>
<comment type="tissue specificity">
    <text evidence="4">Expressed in kidney cortex and intestine.</text>
</comment>
<comment type="similarity">
    <text evidence="5">Belongs to the amino acid-polyamine-organocation (APC) superfamily. L-type amino acid transporter (LAT) (TC 2.A.3.8) family.</text>
</comment>
<gene>
    <name evidence="7" type="primary">Slc7a7</name>
</gene>
<proteinExistence type="evidence at protein level"/>
<feature type="chain" id="PRO_0000304936" description="Y+L amino acid transporter 1">
    <location>
        <begin position="1"/>
        <end position="512"/>
    </location>
</feature>
<feature type="transmembrane region" description="Helical" evidence="2">
    <location>
        <begin position="40"/>
        <end position="60"/>
    </location>
</feature>
<feature type="transmembrane region" description="Helical" evidence="2">
    <location>
        <begin position="72"/>
        <end position="92"/>
    </location>
</feature>
<feature type="transmembrane region" description="Helical" evidence="2">
    <location>
        <begin position="110"/>
        <end position="130"/>
    </location>
</feature>
<feature type="transmembrane region" description="Helical" evidence="2">
    <location>
        <begin position="136"/>
        <end position="156"/>
    </location>
</feature>
<feature type="transmembrane region" description="Helical" evidence="2">
    <location>
        <begin position="163"/>
        <end position="183"/>
    </location>
</feature>
<feature type="transmembrane region" description="Helical" evidence="2">
    <location>
        <begin position="189"/>
        <end position="209"/>
    </location>
</feature>
<feature type="transmembrane region" description="Helical" evidence="2">
    <location>
        <begin position="225"/>
        <end position="245"/>
    </location>
</feature>
<feature type="transmembrane region" description="Helical" evidence="2">
    <location>
        <begin position="262"/>
        <end position="282"/>
    </location>
</feature>
<feature type="transmembrane region" description="Helical" evidence="2">
    <location>
        <begin position="307"/>
        <end position="327"/>
    </location>
</feature>
<feature type="transmembrane region" description="Helical" evidence="2">
    <location>
        <begin position="386"/>
        <end position="406"/>
    </location>
</feature>
<feature type="transmembrane region" description="Helical" evidence="2">
    <location>
        <begin position="419"/>
        <end position="439"/>
    </location>
</feature>
<feature type="transmembrane region" description="Helical" evidence="2">
    <location>
        <begin position="444"/>
        <end position="464"/>
    </location>
</feature>
<feature type="modified residue" description="Phosphoserine" evidence="8">
    <location>
        <position position="21"/>
    </location>
</feature>
<feature type="glycosylation site" description="N-linked (GlcNAc...) asparagine" evidence="2">
    <location>
        <position position="328"/>
    </location>
</feature>
<feature type="sequence conflict" description="In Ref. 2; AAF07216." evidence="5" ref="2">
    <original>A</original>
    <variation>N</variation>
    <location>
        <position position="3"/>
    </location>
</feature>
<evidence type="ECO:0000250" key="1">
    <source>
        <dbReference type="UniProtKB" id="Q9UM01"/>
    </source>
</evidence>
<evidence type="ECO:0000255" key="2"/>
<evidence type="ECO:0000269" key="3">
    <source>
    </source>
</evidence>
<evidence type="ECO:0000269" key="4">
    <source>
    </source>
</evidence>
<evidence type="ECO:0000305" key="5"/>
<evidence type="ECO:0000305" key="6">
    <source>
    </source>
</evidence>
<evidence type="ECO:0000312" key="7">
    <source>
        <dbReference type="RGD" id="619902"/>
    </source>
</evidence>
<evidence type="ECO:0007744" key="8">
    <source>
    </source>
</evidence>
<accession>Q9R0S5</accession>
<accession>Q9QZ66</accession>
<organism>
    <name type="scientific">Rattus norvegicus</name>
    <name type="common">Rat</name>
    <dbReference type="NCBI Taxonomy" id="10116"/>
    <lineage>
        <taxon>Eukaryota</taxon>
        <taxon>Metazoa</taxon>
        <taxon>Chordata</taxon>
        <taxon>Craniata</taxon>
        <taxon>Vertebrata</taxon>
        <taxon>Euteleostomi</taxon>
        <taxon>Mammalia</taxon>
        <taxon>Eutheria</taxon>
        <taxon>Euarchontoglires</taxon>
        <taxon>Glires</taxon>
        <taxon>Rodentia</taxon>
        <taxon>Myomorpha</taxon>
        <taxon>Muroidea</taxon>
        <taxon>Muridae</taxon>
        <taxon>Murinae</taxon>
        <taxon>Rattus</taxon>
    </lineage>
</organism>
<reference key="1">
    <citation type="journal article" date="2000" name="J. Biol. Chem.">
        <title>Transport properties of a system y+L neutral and basic amino acid transporter. Insights into the mechanisms of substrate recognition.</title>
        <authorList>
            <person name="Kanai Y."/>
            <person name="Fukasawa Y."/>
            <person name="Cha S.H."/>
            <person name="Segawa H."/>
            <person name="Chairoungdua A."/>
            <person name="Kim D.K."/>
            <person name="Matsuo H."/>
            <person name="Kim J.Y."/>
            <person name="Miyamoto K."/>
            <person name="Takeda E."/>
            <person name="Endou H."/>
        </authorList>
    </citation>
    <scope>NUCLEOTIDE SEQUENCE [MRNA]</scope>
    <scope>FUNCTION</scope>
    <scope>TRANSPORTER ACTIVITY</scope>
    <scope>BIOPHYSICOCHEMICAL PROPERTIES</scope>
    <source>
        <tissue>Kidney</tissue>
    </source>
</reference>
<reference key="2">
    <citation type="submission" date="1999-11" db="EMBL/GenBank/DDBJ databases">
        <title>cDNA encoding rat jejunal amino acid transporter y+LAT1.</title>
        <authorList>
            <person name="Ng A.M.L."/>
            <person name="Yao S.Y.M."/>
            <person name="Cheeseman C.I."/>
            <person name="Young J.D."/>
        </authorList>
    </citation>
    <scope>NUCLEOTIDE SEQUENCE [MRNA]</scope>
    <source>
        <strain>Sprague-Dawley</strain>
    </source>
</reference>
<reference key="3">
    <citation type="journal article" date="2004" name="Genome Res.">
        <title>The status, quality, and expansion of the NIH full-length cDNA project: the Mammalian Gene Collection (MGC).</title>
        <authorList>
            <consortium name="The MGC Project Team"/>
        </authorList>
    </citation>
    <scope>NUCLEOTIDE SEQUENCE [LARGE SCALE MRNA]</scope>
    <source>
        <tissue>Kidney</tissue>
    </source>
</reference>
<reference key="4">
    <citation type="journal article" date="1999" name="EMBO J.">
        <title>Amino acid transport of y+L-type by heterodimers of 4F2hc/CD98 and members of the glycoprotein-associated amino acid transporter family.</title>
        <authorList>
            <person name="Pfeiffer R."/>
            <person name="Rossier G."/>
            <person name="Spindler B."/>
            <person name="Meier C."/>
            <person name="Kuehn L.C."/>
            <person name="Verrey F."/>
        </authorList>
    </citation>
    <scope>TISSUE SPECIFICITY</scope>
</reference>
<reference key="5">
    <citation type="journal article" date="2012" name="Nat. Commun.">
        <title>Quantitative maps of protein phosphorylation sites across 14 different rat organs and tissues.</title>
        <authorList>
            <person name="Lundby A."/>
            <person name="Secher A."/>
            <person name="Lage K."/>
            <person name="Nordsborg N.B."/>
            <person name="Dmytriyev A."/>
            <person name="Lundby C."/>
            <person name="Olsen J.V."/>
        </authorList>
    </citation>
    <scope>PHOSPHORYLATION [LARGE SCALE ANALYSIS] AT SER-21</scope>
    <scope>IDENTIFICATION BY MASS SPECTROMETRY [LARGE SCALE ANALYSIS]</scope>
</reference>
<name>YLAT1_RAT</name>